<comment type="function">
    <text>The plasma membrane ATPase of plants and fungi is a hydrogen ion pump. The proton gradient it generates drives the active transport of nutrients by H(+)-symport. The resulting external acidification and/or internal alkinization may mediate growth responses.</text>
</comment>
<comment type="catalytic activity">
    <reaction>
        <text>ATP + H2O + H(+)(in) = ADP + phosphate + 2 H(+)(out)</text>
        <dbReference type="Rhea" id="RHEA:20852"/>
        <dbReference type="ChEBI" id="CHEBI:15377"/>
        <dbReference type="ChEBI" id="CHEBI:15378"/>
        <dbReference type="ChEBI" id="CHEBI:30616"/>
        <dbReference type="ChEBI" id="CHEBI:43474"/>
        <dbReference type="ChEBI" id="CHEBI:456216"/>
        <dbReference type="EC" id="7.1.2.1"/>
    </reaction>
</comment>
<comment type="subcellular location">
    <subcellularLocation>
        <location>Cell membrane</location>
        <topology>Multi-pass membrane protein</topology>
    </subcellularLocation>
</comment>
<comment type="similarity">
    <text evidence="4">Belongs to the cation transport ATPase (P-type) (TC 3.A.3) family. Type IIIA subfamily.</text>
</comment>
<reference key="1">
    <citation type="journal article" date="1995" name="Plant Mol. Biol.">
        <title>Primary structure of the plasma membrane H(+)-ATPase from the halotolerant alga Dunaliella bioculata.</title>
        <authorList>
            <person name="Wolf A.H."/>
            <person name="Slayman C.W."/>
            <person name="Gradmann D."/>
        </authorList>
    </citation>
    <scope>NUCLEOTIDE SEQUENCE [MRNA]</scope>
    <source>
        <strain>SAG 19-4</strain>
    </source>
</reference>
<feature type="chain" id="PRO_0000046288" description="Plasma membrane ATPase">
    <location>
        <begin position="1"/>
        <end position="1131"/>
    </location>
</feature>
<feature type="transmembrane region" description="Helical" evidence="2">
    <location>
        <begin position="77"/>
        <end position="97"/>
    </location>
</feature>
<feature type="transmembrane region" description="Helical" evidence="2">
    <location>
        <begin position="98"/>
        <end position="118"/>
    </location>
</feature>
<feature type="transmembrane region" description="Helical" evidence="2">
    <location>
        <begin position="151"/>
        <end position="171"/>
    </location>
</feature>
<feature type="transmembrane region" description="Helical" evidence="2">
    <location>
        <begin position="231"/>
        <end position="251"/>
    </location>
</feature>
<feature type="transmembrane region" description="Helical" evidence="2">
    <location>
        <begin position="265"/>
        <end position="285"/>
    </location>
</feature>
<feature type="transmembrane region" description="Helical" evidence="2">
    <location>
        <begin position="305"/>
        <end position="325"/>
    </location>
</feature>
<feature type="transmembrane region" description="Helical" evidence="2">
    <location>
        <begin position="642"/>
        <end position="662"/>
    </location>
</feature>
<feature type="transmembrane region" description="Helical" evidence="2">
    <location>
        <begin position="689"/>
        <end position="709"/>
    </location>
</feature>
<feature type="transmembrane region" description="Helical" evidence="2">
    <location>
        <begin position="733"/>
        <end position="753"/>
    </location>
</feature>
<feature type="transmembrane region" description="Helical" evidence="2">
    <location>
        <begin position="884"/>
        <end position="904"/>
    </location>
</feature>
<feature type="transmembrane region" description="Helical" evidence="2">
    <location>
        <begin position="946"/>
        <end position="966"/>
    </location>
</feature>
<feature type="region of interest" description="Disordered" evidence="3">
    <location>
        <begin position="994"/>
        <end position="1023"/>
    </location>
</feature>
<feature type="region of interest" description="Disordered" evidence="3">
    <location>
        <begin position="1067"/>
        <end position="1131"/>
    </location>
</feature>
<feature type="compositionally biased region" description="Basic and acidic residues" evidence="3">
    <location>
        <begin position="994"/>
        <end position="1010"/>
    </location>
</feature>
<feature type="compositionally biased region" description="Polar residues" evidence="3">
    <location>
        <begin position="1089"/>
        <end position="1100"/>
    </location>
</feature>
<feature type="compositionally biased region" description="Basic and acidic residues" evidence="3">
    <location>
        <begin position="1118"/>
        <end position="1131"/>
    </location>
</feature>
<feature type="active site" description="4-aspartylphosphate intermediate" evidence="1">
    <location>
        <position position="357"/>
    </location>
</feature>
<feature type="binding site" evidence="1">
    <location>
        <position position="615"/>
    </location>
    <ligand>
        <name>Mg(2+)</name>
        <dbReference type="ChEBI" id="CHEBI:18420"/>
    </ligand>
</feature>
<feature type="binding site" evidence="1">
    <location>
        <position position="619"/>
    </location>
    <ligand>
        <name>Mg(2+)</name>
        <dbReference type="ChEBI" id="CHEBI:18420"/>
    </ligand>
</feature>
<name>PMA1_DUNBI</name>
<evidence type="ECO:0000250" key="1"/>
<evidence type="ECO:0000255" key="2"/>
<evidence type="ECO:0000256" key="3">
    <source>
        <dbReference type="SAM" id="MobiDB-lite"/>
    </source>
</evidence>
<evidence type="ECO:0000305" key="4"/>
<proteinExistence type="evidence at transcript level"/>
<organism>
    <name type="scientific">Dunaliella bioculata</name>
    <name type="common">Green alga</name>
    <dbReference type="NCBI Taxonomy" id="13790"/>
    <lineage>
        <taxon>Eukaryota</taxon>
        <taxon>Viridiplantae</taxon>
        <taxon>Chlorophyta</taxon>
        <taxon>core chlorophytes</taxon>
        <taxon>Chlorophyceae</taxon>
        <taxon>CS clade</taxon>
        <taxon>Chlamydomonadales</taxon>
        <taxon>Dunaliellaceae</taxon>
        <taxon>Dunaliella</taxon>
    </lineage>
</organism>
<gene>
    <name type="primary">PMA1</name>
</gene>
<keyword id="KW-0067">ATP-binding</keyword>
<keyword id="KW-1003">Cell membrane</keyword>
<keyword id="KW-0375">Hydrogen ion transport</keyword>
<keyword id="KW-0406">Ion transport</keyword>
<keyword id="KW-0460">Magnesium</keyword>
<keyword id="KW-0472">Membrane</keyword>
<keyword id="KW-0479">Metal-binding</keyword>
<keyword id="KW-0547">Nucleotide-binding</keyword>
<keyword id="KW-0597">Phosphoprotein</keyword>
<keyword id="KW-1278">Translocase</keyword>
<keyword id="KW-0812">Transmembrane</keyword>
<keyword id="KW-1133">Transmembrane helix</keyword>
<keyword id="KW-0813">Transport</keyword>
<protein>
    <recommendedName>
        <fullName>Plasma membrane ATPase</fullName>
        <ecNumber>7.1.2.1</ecNumber>
    </recommendedName>
    <alternativeName>
        <fullName>Proton pump</fullName>
    </alternativeName>
</protein>
<sequence>MADIKEGVEEGSVKVDMIKEPLTQGDTGVDEVDFAKITLDDAFKYLNCNKHGLSSAEAAARLQQHGPNKLPDSSRNPVLVFLGYMWNPLAWAMEAAAIISIALLDVADFVLIVGLLLINAIISFYEESNADKAIKALTAALAPKAMVVRDGAIVTIDAVNLVPGDVILIRLGNIVPADVKLLEEEGADEGEQEAPMQIDQAALTGESLPAKKFTGDVAFSGSSIKQGERHAVVYATGVNTFFGRAAALISGTNNVSNLQTVMNKMSAICIVTILLWVVVELAVQFGHYSHECVGGREGCPTLLNMLVVLVGGIPIAMPTVLSVTLALGAYKLAREGAIVTRMSAVEEMAGMDVLCSDKTGTLTLNKLSIDKSMVVPVGNMGVDEIMRMGALSANTVTEEPIDMVLWESYPDRETIKRDYKHTKYFPFNPNDKITIATCLEIATGRVFRVLKGSPQVVLAKAWNAAELDATVNQKMVEFANRGFRALGLAMADGDGKDGTKWEMLALLPLFDPPRHDTKETIEHCQNQGIQVKMITGDHLLIGKETAKMLGMGTEMFPSEVMIKARNGDASQLHGYKNFVEMVETCNGFAQVFPEHKFEIVKILQDSNHVVGMTGDGVNDAPALKKADVGVAVADATDAARGAADIVLTEPGLSTIVTAVIGARKIFQRMTTYSKYTIAMTFRICFTFGLITVIYDWYFPTILIVIMAVFNDGAMIALSKDRVVASKTPNSWNITNIFIMGMVYGLYLTLSTWALYQTATKTTFFEDKTPLHSLNDQYSVLQPWCEDEVRAKLGQTIDPYASLCESNSYAKQFDECEGYQKGSGVQVEDVPTLHAQCVTEQRYLRGAMTRSLIYTQVSISGQALVFVVRTAGYSLMERAGTSTYLAFFFAQVGATLFGIFGLGGFEKPRHQLEDCQFCDYSFHEPVDWFDSGIVPESGTESDFTASVIGCGGYVIVAWIWSAIWYVLLDPIKWILFWILNEEGFRDTMSWRESTKRSLDRRSKDDIGDKEFTGPSGMVPANYSNPLGRASMSKPVSAVLDRKSASLVAINRNSMTVSQDPNRALNIGRRSMIGRPSGPVGRTSMPLGRISRTSNTLSTGSKDGQIGRGSKPLNSSSAEIKPDKYDFASTIRE</sequence>
<accession>P54211</accession>
<dbReference type="EC" id="7.1.2.1"/>
<dbReference type="EMBL" id="X73901">
    <property type="protein sequence ID" value="CAA52107.1"/>
    <property type="molecule type" value="mRNA"/>
</dbReference>
<dbReference type="PIR" id="S57807">
    <property type="entry name" value="S34213"/>
</dbReference>
<dbReference type="SMR" id="P54211"/>
<dbReference type="GO" id="GO:0005886">
    <property type="term" value="C:plasma membrane"/>
    <property type="evidence" value="ECO:0007669"/>
    <property type="project" value="UniProtKB-SubCell"/>
</dbReference>
<dbReference type="GO" id="GO:0005524">
    <property type="term" value="F:ATP binding"/>
    <property type="evidence" value="ECO:0007669"/>
    <property type="project" value="UniProtKB-KW"/>
</dbReference>
<dbReference type="GO" id="GO:0016887">
    <property type="term" value="F:ATP hydrolysis activity"/>
    <property type="evidence" value="ECO:0007669"/>
    <property type="project" value="InterPro"/>
</dbReference>
<dbReference type="GO" id="GO:0046872">
    <property type="term" value="F:metal ion binding"/>
    <property type="evidence" value="ECO:0007669"/>
    <property type="project" value="UniProtKB-KW"/>
</dbReference>
<dbReference type="GO" id="GO:0008553">
    <property type="term" value="F:P-type proton-exporting transporter activity"/>
    <property type="evidence" value="ECO:0007669"/>
    <property type="project" value="UniProtKB-EC"/>
</dbReference>
<dbReference type="GO" id="GO:0120029">
    <property type="term" value="P:proton export across plasma membrane"/>
    <property type="evidence" value="ECO:0007669"/>
    <property type="project" value="InterPro"/>
</dbReference>
<dbReference type="FunFam" id="2.70.150.10:FF:000042">
    <property type="entry name" value="Plasma membrane ATPase"/>
    <property type="match status" value="1"/>
</dbReference>
<dbReference type="FunFam" id="3.40.50.1000:FF:000211">
    <property type="entry name" value="Plasma membrane ATPase"/>
    <property type="match status" value="1"/>
</dbReference>
<dbReference type="Gene3D" id="3.40.1110.10">
    <property type="entry name" value="Calcium-transporting ATPase, cytoplasmic domain N"/>
    <property type="match status" value="1"/>
</dbReference>
<dbReference type="Gene3D" id="2.70.150.10">
    <property type="entry name" value="Calcium-transporting ATPase, cytoplasmic transduction domain A"/>
    <property type="match status" value="1"/>
</dbReference>
<dbReference type="Gene3D" id="1.20.1110.10">
    <property type="entry name" value="Calcium-transporting ATPase, transmembrane domain"/>
    <property type="match status" value="1"/>
</dbReference>
<dbReference type="Gene3D" id="3.40.50.1000">
    <property type="entry name" value="HAD superfamily/HAD-like"/>
    <property type="match status" value="1"/>
</dbReference>
<dbReference type="InterPro" id="IPR004014">
    <property type="entry name" value="ATPase_P-typ_cation-transptr_N"/>
</dbReference>
<dbReference type="InterPro" id="IPR023299">
    <property type="entry name" value="ATPase_P-typ_cyto_dom_N"/>
</dbReference>
<dbReference type="InterPro" id="IPR018303">
    <property type="entry name" value="ATPase_P-typ_P_site"/>
</dbReference>
<dbReference type="InterPro" id="IPR023298">
    <property type="entry name" value="ATPase_P-typ_TM_dom_sf"/>
</dbReference>
<dbReference type="InterPro" id="IPR008250">
    <property type="entry name" value="ATPase_P-typ_transduc_dom_A_sf"/>
</dbReference>
<dbReference type="InterPro" id="IPR036412">
    <property type="entry name" value="HAD-like_sf"/>
</dbReference>
<dbReference type="InterPro" id="IPR023214">
    <property type="entry name" value="HAD_sf"/>
</dbReference>
<dbReference type="InterPro" id="IPR006534">
    <property type="entry name" value="P-type_ATPase_IIIA"/>
</dbReference>
<dbReference type="InterPro" id="IPR001757">
    <property type="entry name" value="P_typ_ATPase"/>
</dbReference>
<dbReference type="InterPro" id="IPR044492">
    <property type="entry name" value="P_typ_ATPase_HD_dom"/>
</dbReference>
<dbReference type="NCBIfam" id="TIGR01647">
    <property type="entry name" value="ATPase-IIIA_H"/>
    <property type="match status" value="1"/>
</dbReference>
<dbReference type="NCBIfam" id="TIGR01494">
    <property type="entry name" value="ATPase_P-type"/>
    <property type="match status" value="2"/>
</dbReference>
<dbReference type="PANTHER" id="PTHR42861">
    <property type="entry name" value="CALCIUM-TRANSPORTING ATPASE"/>
    <property type="match status" value="1"/>
</dbReference>
<dbReference type="Pfam" id="PF00690">
    <property type="entry name" value="Cation_ATPase_N"/>
    <property type="match status" value="1"/>
</dbReference>
<dbReference type="Pfam" id="PF00122">
    <property type="entry name" value="E1-E2_ATPase"/>
    <property type="match status" value="1"/>
</dbReference>
<dbReference type="Pfam" id="PF00702">
    <property type="entry name" value="Hydrolase"/>
    <property type="match status" value="1"/>
</dbReference>
<dbReference type="PRINTS" id="PR00119">
    <property type="entry name" value="CATATPASE"/>
</dbReference>
<dbReference type="PRINTS" id="PR00120">
    <property type="entry name" value="HATPASE"/>
</dbReference>
<dbReference type="SFLD" id="SFLDG00002">
    <property type="entry name" value="C1.7:_P-type_atpase_like"/>
    <property type="match status" value="1"/>
</dbReference>
<dbReference type="SFLD" id="SFLDF00027">
    <property type="entry name" value="p-type_atpase"/>
    <property type="match status" value="1"/>
</dbReference>
<dbReference type="SMART" id="SM00831">
    <property type="entry name" value="Cation_ATPase_N"/>
    <property type="match status" value="1"/>
</dbReference>
<dbReference type="SUPFAM" id="SSF81653">
    <property type="entry name" value="Calcium ATPase, transduction domain A"/>
    <property type="match status" value="1"/>
</dbReference>
<dbReference type="SUPFAM" id="SSF81665">
    <property type="entry name" value="Calcium ATPase, transmembrane domain M"/>
    <property type="match status" value="1"/>
</dbReference>
<dbReference type="SUPFAM" id="SSF56784">
    <property type="entry name" value="HAD-like"/>
    <property type="match status" value="1"/>
</dbReference>
<dbReference type="PROSITE" id="PS00154">
    <property type="entry name" value="ATPASE_E1_E2"/>
    <property type="match status" value="1"/>
</dbReference>